<proteinExistence type="inferred from homology"/>
<name>KHSE_CORDI</name>
<gene>
    <name evidence="1" type="primary">thrB</name>
    <name type="ordered locus">DIP1037</name>
</gene>
<evidence type="ECO:0000255" key="1">
    <source>
        <dbReference type="HAMAP-Rule" id="MF_00384"/>
    </source>
</evidence>
<comment type="function">
    <text evidence="1">Catalyzes the ATP-dependent phosphorylation of L-homoserine to L-homoserine phosphate.</text>
</comment>
<comment type="catalytic activity">
    <reaction evidence="1">
        <text>L-homoserine + ATP = O-phospho-L-homoserine + ADP + H(+)</text>
        <dbReference type="Rhea" id="RHEA:13985"/>
        <dbReference type="ChEBI" id="CHEBI:15378"/>
        <dbReference type="ChEBI" id="CHEBI:30616"/>
        <dbReference type="ChEBI" id="CHEBI:57476"/>
        <dbReference type="ChEBI" id="CHEBI:57590"/>
        <dbReference type="ChEBI" id="CHEBI:456216"/>
        <dbReference type="EC" id="2.7.1.39"/>
    </reaction>
</comment>
<comment type="pathway">
    <text evidence="1">Amino-acid biosynthesis; L-threonine biosynthesis; L-threonine from L-aspartate: step 4/5.</text>
</comment>
<comment type="subcellular location">
    <subcellularLocation>
        <location evidence="1">Cytoplasm</location>
    </subcellularLocation>
</comment>
<comment type="similarity">
    <text evidence="1">Belongs to the GHMP kinase family. Homoserine kinase subfamily.</text>
</comment>
<dbReference type="EC" id="2.7.1.39" evidence="1"/>
<dbReference type="EMBL" id="BX248356">
    <property type="protein sequence ID" value="CAE49558.1"/>
    <property type="molecule type" value="Genomic_DNA"/>
</dbReference>
<dbReference type="RefSeq" id="WP_010934760.1">
    <property type="nucleotide sequence ID" value="NC_002935.2"/>
</dbReference>
<dbReference type="SMR" id="Q6NHU3"/>
<dbReference type="STRING" id="257309.DIP1037"/>
<dbReference type="KEGG" id="cdi:DIP1037"/>
<dbReference type="HOGENOM" id="CLU_041243_0_1_11"/>
<dbReference type="UniPathway" id="UPA00050">
    <property type="reaction ID" value="UER00064"/>
</dbReference>
<dbReference type="Proteomes" id="UP000002198">
    <property type="component" value="Chromosome"/>
</dbReference>
<dbReference type="GO" id="GO:0005737">
    <property type="term" value="C:cytoplasm"/>
    <property type="evidence" value="ECO:0007669"/>
    <property type="project" value="UniProtKB-SubCell"/>
</dbReference>
<dbReference type="GO" id="GO:0005524">
    <property type="term" value="F:ATP binding"/>
    <property type="evidence" value="ECO:0007669"/>
    <property type="project" value="UniProtKB-UniRule"/>
</dbReference>
<dbReference type="GO" id="GO:0004413">
    <property type="term" value="F:homoserine kinase activity"/>
    <property type="evidence" value="ECO:0007669"/>
    <property type="project" value="UniProtKB-UniRule"/>
</dbReference>
<dbReference type="GO" id="GO:0009088">
    <property type="term" value="P:threonine biosynthetic process"/>
    <property type="evidence" value="ECO:0007669"/>
    <property type="project" value="UniProtKB-UniRule"/>
</dbReference>
<dbReference type="Gene3D" id="3.30.230.10">
    <property type="match status" value="1"/>
</dbReference>
<dbReference type="Gene3D" id="3.30.70.890">
    <property type="entry name" value="GHMP kinase, C-terminal domain"/>
    <property type="match status" value="1"/>
</dbReference>
<dbReference type="HAMAP" id="MF_00384">
    <property type="entry name" value="Homoser_kinase"/>
    <property type="match status" value="1"/>
</dbReference>
<dbReference type="InterPro" id="IPR013750">
    <property type="entry name" value="GHMP_kinase_C_dom"/>
</dbReference>
<dbReference type="InterPro" id="IPR036554">
    <property type="entry name" value="GHMP_kinase_C_sf"/>
</dbReference>
<dbReference type="InterPro" id="IPR006204">
    <property type="entry name" value="GHMP_kinase_N_dom"/>
</dbReference>
<dbReference type="InterPro" id="IPR006203">
    <property type="entry name" value="GHMP_knse_ATP-bd_CS"/>
</dbReference>
<dbReference type="InterPro" id="IPR000870">
    <property type="entry name" value="Homoserine_kinase"/>
</dbReference>
<dbReference type="InterPro" id="IPR020568">
    <property type="entry name" value="Ribosomal_Su5_D2-typ_SF"/>
</dbReference>
<dbReference type="InterPro" id="IPR014721">
    <property type="entry name" value="Ribsml_uS5_D2-typ_fold_subgr"/>
</dbReference>
<dbReference type="NCBIfam" id="TIGR00191">
    <property type="entry name" value="thrB"/>
    <property type="match status" value="1"/>
</dbReference>
<dbReference type="PANTHER" id="PTHR20861:SF1">
    <property type="entry name" value="HOMOSERINE KINASE"/>
    <property type="match status" value="1"/>
</dbReference>
<dbReference type="PANTHER" id="PTHR20861">
    <property type="entry name" value="HOMOSERINE/4-DIPHOSPHOCYTIDYL-2-C-METHYL-D-ERYTHRITOL KINASE"/>
    <property type="match status" value="1"/>
</dbReference>
<dbReference type="Pfam" id="PF08544">
    <property type="entry name" value="GHMP_kinases_C"/>
    <property type="match status" value="1"/>
</dbReference>
<dbReference type="Pfam" id="PF00288">
    <property type="entry name" value="GHMP_kinases_N"/>
    <property type="match status" value="1"/>
</dbReference>
<dbReference type="PIRSF" id="PIRSF000676">
    <property type="entry name" value="Homoser_kin"/>
    <property type="match status" value="1"/>
</dbReference>
<dbReference type="PRINTS" id="PR00958">
    <property type="entry name" value="HOMSERKINASE"/>
</dbReference>
<dbReference type="SUPFAM" id="SSF55060">
    <property type="entry name" value="GHMP Kinase, C-terminal domain"/>
    <property type="match status" value="1"/>
</dbReference>
<dbReference type="SUPFAM" id="SSF54211">
    <property type="entry name" value="Ribosomal protein S5 domain 2-like"/>
    <property type="match status" value="1"/>
</dbReference>
<dbReference type="PROSITE" id="PS00627">
    <property type="entry name" value="GHMP_KINASES_ATP"/>
    <property type="match status" value="1"/>
</dbReference>
<accession>Q6NHU3</accession>
<organism>
    <name type="scientific">Corynebacterium diphtheriae (strain ATCC 700971 / NCTC 13129 / Biotype gravis)</name>
    <dbReference type="NCBI Taxonomy" id="257309"/>
    <lineage>
        <taxon>Bacteria</taxon>
        <taxon>Bacillati</taxon>
        <taxon>Actinomycetota</taxon>
        <taxon>Actinomycetes</taxon>
        <taxon>Mycobacteriales</taxon>
        <taxon>Corynebacteriaceae</taxon>
        <taxon>Corynebacterium</taxon>
    </lineage>
</organism>
<sequence>MAIELPVGKKVTVTVPASSANLGPGFDTLGLALSLYDTVEVEVTDHGLEVEVFGEGQGELPLDGSHLVVKAIRAGLKAADVQVPGLRVVCHNNIPQSRGLGSSAAAAVAGVAAANGLAGFPLDDARVVQLSSAFEGHPDNAAASVLGNAVVSWTEIPVDGRTEPQFKAVTINVDSRIKATALVPDFHASTEAVRRVLPSDVTHLDARFNVSRCAVMTVALQHHPELLWEGTRDRLHQPYRADVLPVTAEWVNRLRNRGYAAYLSGAGPTIMVLHTEPVDEAVLNDAREAGLRVLSLDVADAVSVKVDA</sequence>
<feature type="chain" id="PRO_0000156563" description="Homoserine kinase">
    <location>
        <begin position="1"/>
        <end position="308"/>
    </location>
</feature>
<feature type="binding site" evidence="1">
    <location>
        <begin position="95"/>
        <end position="105"/>
    </location>
    <ligand>
        <name>ATP</name>
        <dbReference type="ChEBI" id="CHEBI:30616"/>
    </ligand>
</feature>
<keyword id="KW-0028">Amino-acid biosynthesis</keyword>
<keyword id="KW-0067">ATP-binding</keyword>
<keyword id="KW-0963">Cytoplasm</keyword>
<keyword id="KW-0418">Kinase</keyword>
<keyword id="KW-0547">Nucleotide-binding</keyword>
<keyword id="KW-1185">Reference proteome</keyword>
<keyword id="KW-0791">Threonine biosynthesis</keyword>
<keyword id="KW-0808">Transferase</keyword>
<protein>
    <recommendedName>
        <fullName evidence="1">Homoserine kinase</fullName>
        <shortName evidence="1">HK</shortName>
        <shortName evidence="1">HSK</shortName>
        <ecNumber evidence="1">2.7.1.39</ecNumber>
    </recommendedName>
</protein>
<reference key="1">
    <citation type="journal article" date="2003" name="Nucleic Acids Res.">
        <title>The complete genome sequence and analysis of Corynebacterium diphtheriae NCTC13129.</title>
        <authorList>
            <person name="Cerdeno-Tarraga A.-M."/>
            <person name="Efstratiou A."/>
            <person name="Dover L.G."/>
            <person name="Holden M.T.G."/>
            <person name="Pallen M.J."/>
            <person name="Bentley S.D."/>
            <person name="Besra G.S."/>
            <person name="Churcher C.M."/>
            <person name="James K.D."/>
            <person name="De Zoysa A."/>
            <person name="Chillingworth T."/>
            <person name="Cronin A."/>
            <person name="Dowd L."/>
            <person name="Feltwell T."/>
            <person name="Hamlin N."/>
            <person name="Holroyd S."/>
            <person name="Jagels K."/>
            <person name="Moule S."/>
            <person name="Quail M.A."/>
            <person name="Rabbinowitsch E."/>
            <person name="Rutherford K.M."/>
            <person name="Thomson N.R."/>
            <person name="Unwin L."/>
            <person name="Whitehead S."/>
            <person name="Barrell B.G."/>
            <person name="Parkhill J."/>
        </authorList>
    </citation>
    <scope>NUCLEOTIDE SEQUENCE [LARGE SCALE GENOMIC DNA]</scope>
    <source>
        <strain>ATCC 700971 / NCTC 13129 / Biotype gravis</strain>
    </source>
</reference>